<reference key="1">
    <citation type="journal article" date="2006" name="J. Bacteriol.">
        <title>The genome sequence of the obligately chemolithoautotrophic, facultatively anaerobic bacterium Thiobacillus denitrificans.</title>
        <authorList>
            <person name="Beller H.R."/>
            <person name="Chain P.S."/>
            <person name="Letain T.E."/>
            <person name="Chakicherla A."/>
            <person name="Larimer F.W."/>
            <person name="Richardson P.M."/>
            <person name="Coleman M.A."/>
            <person name="Wood A.P."/>
            <person name="Kelly D.P."/>
        </authorList>
    </citation>
    <scope>NUCLEOTIDE SEQUENCE [LARGE SCALE GENOMIC DNA]</scope>
    <source>
        <strain>ATCC 25259 / T1</strain>
    </source>
</reference>
<keyword id="KW-0119">Carbohydrate metabolism</keyword>
<keyword id="KW-0963">Cytoplasm</keyword>
<keyword id="KW-0413">Isomerase</keyword>
<keyword id="KW-0479">Metal-binding</keyword>
<keyword id="KW-1185">Reference proteome</keyword>
<keyword id="KW-0862">Zinc</keyword>
<dbReference type="EC" id="5.3.1.28" evidence="1"/>
<dbReference type="EMBL" id="CP000116">
    <property type="protein sequence ID" value="AAZ96060.1"/>
    <property type="molecule type" value="Genomic_DNA"/>
</dbReference>
<dbReference type="RefSeq" id="WP_011310620.1">
    <property type="nucleotide sequence ID" value="NC_007404.1"/>
</dbReference>
<dbReference type="SMR" id="Q3SMI5"/>
<dbReference type="STRING" id="292415.Tbd_0107"/>
<dbReference type="KEGG" id="tbd:Tbd_0107"/>
<dbReference type="eggNOG" id="COG0279">
    <property type="taxonomic scope" value="Bacteria"/>
</dbReference>
<dbReference type="HOGENOM" id="CLU_080999_4_0_4"/>
<dbReference type="OrthoDB" id="9810929at2"/>
<dbReference type="UniPathway" id="UPA00041">
    <property type="reaction ID" value="UER00436"/>
</dbReference>
<dbReference type="Proteomes" id="UP000008291">
    <property type="component" value="Chromosome"/>
</dbReference>
<dbReference type="GO" id="GO:0005737">
    <property type="term" value="C:cytoplasm"/>
    <property type="evidence" value="ECO:0007669"/>
    <property type="project" value="UniProtKB-SubCell"/>
</dbReference>
<dbReference type="GO" id="GO:0097367">
    <property type="term" value="F:carbohydrate derivative binding"/>
    <property type="evidence" value="ECO:0007669"/>
    <property type="project" value="InterPro"/>
</dbReference>
<dbReference type="GO" id="GO:0008968">
    <property type="term" value="F:D-sedoheptulose 7-phosphate isomerase activity"/>
    <property type="evidence" value="ECO:0007669"/>
    <property type="project" value="UniProtKB-UniRule"/>
</dbReference>
<dbReference type="GO" id="GO:0008270">
    <property type="term" value="F:zinc ion binding"/>
    <property type="evidence" value="ECO:0007669"/>
    <property type="project" value="UniProtKB-UniRule"/>
</dbReference>
<dbReference type="GO" id="GO:0005975">
    <property type="term" value="P:carbohydrate metabolic process"/>
    <property type="evidence" value="ECO:0007669"/>
    <property type="project" value="UniProtKB-UniRule"/>
</dbReference>
<dbReference type="GO" id="GO:2001061">
    <property type="term" value="P:D-glycero-D-manno-heptose 7-phosphate biosynthetic process"/>
    <property type="evidence" value="ECO:0007669"/>
    <property type="project" value="UniProtKB-UniPathway"/>
</dbReference>
<dbReference type="CDD" id="cd05006">
    <property type="entry name" value="SIS_GmhA"/>
    <property type="match status" value="1"/>
</dbReference>
<dbReference type="Gene3D" id="3.40.50.10490">
    <property type="entry name" value="Glucose-6-phosphate isomerase like protein, domain 1"/>
    <property type="match status" value="1"/>
</dbReference>
<dbReference type="HAMAP" id="MF_00067">
    <property type="entry name" value="GmhA"/>
    <property type="match status" value="1"/>
</dbReference>
<dbReference type="InterPro" id="IPR035461">
    <property type="entry name" value="GmhA/DiaA"/>
</dbReference>
<dbReference type="InterPro" id="IPR004515">
    <property type="entry name" value="Phosphoheptose_Isoase"/>
</dbReference>
<dbReference type="InterPro" id="IPR001347">
    <property type="entry name" value="SIS_dom"/>
</dbReference>
<dbReference type="InterPro" id="IPR046348">
    <property type="entry name" value="SIS_dom_sf"/>
</dbReference>
<dbReference type="InterPro" id="IPR050099">
    <property type="entry name" value="SIS_GmhA/DiaA_subfam"/>
</dbReference>
<dbReference type="NCBIfam" id="NF010546">
    <property type="entry name" value="PRK13936.1"/>
    <property type="match status" value="1"/>
</dbReference>
<dbReference type="PANTHER" id="PTHR30390:SF6">
    <property type="entry name" value="DNAA INITIATOR-ASSOCIATING PROTEIN DIAA"/>
    <property type="match status" value="1"/>
</dbReference>
<dbReference type="PANTHER" id="PTHR30390">
    <property type="entry name" value="SEDOHEPTULOSE 7-PHOSPHATE ISOMERASE / DNAA INITIATOR-ASSOCIATING FACTOR FOR REPLICATION INITIATION"/>
    <property type="match status" value="1"/>
</dbReference>
<dbReference type="Pfam" id="PF13580">
    <property type="entry name" value="SIS_2"/>
    <property type="match status" value="1"/>
</dbReference>
<dbReference type="SUPFAM" id="SSF53697">
    <property type="entry name" value="SIS domain"/>
    <property type="match status" value="1"/>
</dbReference>
<dbReference type="PROSITE" id="PS51464">
    <property type="entry name" value="SIS"/>
    <property type="match status" value="1"/>
</dbReference>
<evidence type="ECO:0000255" key="1">
    <source>
        <dbReference type="HAMAP-Rule" id="MF_00067"/>
    </source>
</evidence>
<proteinExistence type="inferred from homology"/>
<organism>
    <name type="scientific">Thiobacillus denitrificans (strain ATCC 25259 / T1)</name>
    <dbReference type="NCBI Taxonomy" id="292415"/>
    <lineage>
        <taxon>Bacteria</taxon>
        <taxon>Pseudomonadati</taxon>
        <taxon>Pseudomonadota</taxon>
        <taxon>Betaproteobacteria</taxon>
        <taxon>Nitrosomonadales</taxon>
        <taxon>Thiobacillaceae</taxon>
        <taxon>Thiobacillus</taxon>
    </lineage>
</organism>
<protein>
    <recommendedName>
        <fullName evidence="1">Phosphoheptose isomerase</fullName>
        <ecNumber evidence="1">5.3.1.28</ecNumber>
    </recommendedName>
    <alternativeName>
        <fullName evidence="1">Sedoheptulose 7-phosphate isomerase</fullName>
    </alternativeName>
</protein>
<name>GMHA_THIDA</name>
<comment type="function">
    <text evidence="1">Catalyzes the isomerization of sedoheptulose 7-phosphate in D-glycero-D-manno-heptose 7-phosphate.</text>
</comment>
<comment type="catalytic activity">
    <reaction evidence="1">
        <text>2 D-sedoheptulose 7-phosphate = D-glycero-alpha-D-manno-heptose 7-phosphate + D-glycero-beta-D-manno-heptose 7-phosphate</text>
        <dbReference type="Rhea" id="RHEA:27489"/>
        <dbReference type="ChEBI" id="CHEBI:57483"/>
        <dbReference type="ChEBI" id="CHEBI:60203"/>
        <dbReference type="ChEBI" id="CHEBI:60204"/>
        <dbReference type="EC" id="5.3.1.28"/>
    </reaction>
</comment>
<comment type="cofactor">
    <cofactor evidence="1">
        <name>Zn(2+)</name>
        <dbReference type="ChEBI" id="CHEBI:29105"/>
    </cofactor>
    <text evidence="1">Binds 1 zinc ion per subunit.</text>
</comment>
<comment type="pathway">
    <text evidence="1">Carbohydrate biosynthesis; D-glycero-D-manno-heptose 7-phosphate biosynthesis; D-glycero-alpha-D-manno-heptose 7-phosphate and D-glycero-beta-D-manno-heptose 7-phosphate from sedoheptulose 7-phosphate: step 1/1.</text>
</comment>
<comment type="subunit">
    <text evidence="1">Homotetramer.</text>
</comment>
<comment type="subcellular location">
    <subcellularLocation>
        <location evidence="1">Cytoplasm</location>
    </subcellularLocation>
</comment>
<comment type="miscellaneous">
    <text evidence="1">The reaction produces a racemic mixture of D-glycero-alpha-D-manno-heptose 7-phosphate and D-glycero-beta-D-manno-heptose 7-phosphate.</text>
</comment>
<comment type="similarity">
    <text evidence="1">Belongs to the SIS family. GmhA subfamily.</text>
</comment>
<sequence>MPLHDRIVGHFQASAQSKLDAADALAPRIEQGARLLVHSLAQGGKILACGNGGSAADAQHFASEMLNRFEQERPGLAALALTTDTSTLTSIANDYAYDQVFARQVKALGQPGDVLLAISTSGNSANVLQAVAAAHARSMQVIALTGRSGGGLAEQIDDGDVCICVPAESTARIQEIHLLTIHCLCDAVDSLLLGVEE</sequence>
<feature type="chain" id="PRO_1000009100" description="Phosphoheptose isomerase">
    <location>
        <begin position="1"/>
        <end position="197"/>
    </location>
</feature>
<feature type="domain" description="SIS" evidence="1">
    <location>
        <begin position="36"/>
        <end position="197"/>
    </location>
</feature>
<feature type="binding site" evidence="1">
    <location>
        <begin position="51"/>
        <end position="53"/>
    </location>
    <ligand>
        <name>substrate</name>
    </ligand>
</feature>
<feature type="binding site" evidence="1">
    <location>
        <position position="60"/>
    </location>
    <ligand>
        <name>Zn(2+)</name>
        <dbReference type="ChEBI" id="CHEBI:29105"/>
    </ligand>
</feature>
<feature type="binding site" evidence="1">
    <location>
        <position position="64"/>
    </location>
    <ligand>
        <name>substrate</name>
    </ligand>
</feature>
<feature type="binding site" evidence="1">
    <location>
        <position position="64"/>
    </location>
    <ligand>
        <name>Zn(2+)</name>
        <dbReference type="ChEBI" id="CHEBI:29105"/>
    </ligand>
</feature>
<feature type="binding site" evidence="1">
    <location>
        <begin position="93"/>
        <end position="94"/>
    </location>
    <ligand>
        <name>substrate</name>
    </ligand>
</feature>
<feature type="binding site" evidence="1">
    <location>
        <begin position="119"/>
        <end position="121"/>
    </location>
    <ligand>
        <name>substrate</name>
    </ligand>
</feature>
<feature type="binding site" evidence="1">
    <location>
        <position position="124"/>
    </location>
    <ligand>
        <name>substrate</name>
    </ligand>
</feature>
<feature type="binding site" evidence="1">
    <location>
        <position position="174"/>
    </location>
    <ligand>
        <name>substrate</name>
    </ligand>
</feature>
<feature type="binding site" evidence="1">
    <location>
        <position position="174"/>
    </location>
    <ligand>
        <name>Zn(2+)</name>
        <dbReference type="ChEBI" id="CHEBI:29105"/>
    </ligand>
</feature>
<feature type="binding site" evidence="1">
    <location>
        <position position="182"/>
    </location>
    <ligand>
        <name>Zn(2+)</name>
        <dbReference type="ChEBI" id="CHEBI:29105"/>
    </ligand>
</feature>
<accession>Q3SMI5</accession>
<gene>
    <name evidence="1" type="primary">gmhA</name>
    <name type="ordered locus">Tbd_0107</name>
</gene>